<accession>Q94Q45</accession>
<proteinExistence type="inferred from homology"/>
<comment type="function">
    <text evidence="2">Component of the ubiquinol-cytochrome c reductase complex (complex III or cytochrome b-c1 complex) that is part of the mitochondrial respiratory chain. The b-c1 complex mediates electron transfer from ubiquinol to cytochrome c. Contributes to the generation of a proton gradient across the mitochondrial membrane that is then used for ATP synthesis.</text>
</comment>
<comment type="cofactor">
    <cofactor evidence="2">
        <name>heme b</name>
        <dbReference type="ChEBI" id="CHEBI:60344"/>
    </cofactor>
    <text evidence="2">Binds 2 heme b groups non-covalently.</text>
</comment>
<comment type="subunit">
    <text evidence="2">The cytochrome bc1 complex contains 11 subunits: 3 respiratory subunits (MT-CYB, CYC1 and UQCRFS1), 2 core proteins (UQCRC1 and UQCRC2) and 6 low-molecular weight proteins (UQCRH/QCR6, UQCRB/QCR7, UQCRQ/QCR8, UQCR10/QCR9, UQCR11/QCR10 and a cleavage product of UQCRFS1). This cytochrome bc1 complex then forms a dimer.</text>
</comment>
<comment type="subcellular location">
    <subcellularLocation>
        <location evidence="2">Mitochondrion inner membrane</location>
        <topology evidence="2">Multi-pass membrane protein</topology>
    </subcellularLocation>
</comment>
<comment type="miscellaneous">
    <text evidence="1">Heme 1 (or BL or b562) is low-potential and absorbs at about 562 nm, and heme 2 (or BH or b566) is high-potential and absorbs at about 566 nm.</text>
</comment>
<comment type="similarity">
    <text evidence="3 4">Belongs to the cytochrome b family.</text>
</comment>
<comment type="caution">
    <text evidence="2">The full-length protein contains only eight transmembrane helices, not nine as predicted by bioinformatics tools.</text>
</comment>
<reference key="1">
    <citation type="journal article" date="2001" name="Mol. Phylogenet. Evol.">
        <title>Molecular phylogeny of the chipmunks inferred from mitochondrial cytochrome b and cytochrome oxidase II gene sequences.</title>
        <authorList>
            <person name="Piaggio A.J."/>
            <person name="Spicer G.S."/>
        </authorList>
    </citation>
    <scope>NUCLEOTIDE SEQUENCE [GENOMIC DNA]</scope>
</reference>
<organism>
    <name type="scientific">Neotamias cinereicollis</name>
    <name type="common">Gray-collared chipmunk</name>
    <name type="synonym">Tamias cinereicollis</name>
    <dbReference type="NCBI Taxonomy" id="3370376"/>
    <lineage>
        <taxon>Eukaryota</taxon>
        <taxon>Metazoa</taxon>
        <taxon>Chordata</taxon>
        <taxon>Craniata</taxon>
        <taxon>Vertebrata</taxon>
        <taxon>Euteleostomi</taxon>
        <taxon>Mammalia</taxon>
        <taxon>Eutheria</taxon>
        <taxon>Euarchontoglires</taxon>
        <taxon>Glires</taxon>
        <taxon>Rodentia</taxon>
        <taxon>Sciuromorpha</taxon>
        <taxon>Sciuridae</taxon>
        <taxon>Xerinae</taxon>
        <taxon>Marmotini</taxon>
        <taxon>Neotamias</taxon>
    </lineage>
</organism>
<dbReference type="EMBL" id="AF147636">
    <property type="protein sequence ID" value="AAL14035.1"/>
    <property type="molecule type" value="Genomic_DNA"/>
</dbReference>
<dbReference type="EMBL" id="AF147637">
    <property type="protein sequence ID" value="AAL14036.1"/>
    <property type="molecule type" value="Genomic_DNA"/>
</dbReference>
<dbReference type="RefSeq" id="YP_009332087.1">
    <property type="nucleotide sequence ID" value="NC_032374.1"/>
</dbReference>
<dbReference type="SMR" id="Q94Q45"/>
<dbReference type="GeneID" id="30684482"/>
<dbReference type="CTD" id="4519"/>
<dbReference type="GO" id="GO:0005743">
    <property type="term" value="C:mitochondrial inner membrane"/>
    <property type="evidence" value="ECO:0007669"/>
    <property type="project" value="UniProtKB-SubCell"/>
</dbReference>
<dbReference type="GO" id="GO:0045275">
    <property type="term" value="C:respiratory chain complex III"/>
    <property type="evidence" value="ECO:0007669"/>
    <property type="project" value="InterPro"/>
</dbReference>
<dbReference type="GO" id="GO:0046872">
    <property type="term" value="F:metal ion binding"/>
    <property type="evidence" value="ECO:0007669"/>
    <property type="project" value="UniProtKB-KW"/>
</dbReference>
<dbReference type="GO" id="GO:0008121">
    <property type="term" value="F:ubiquinol-cytochrome-c reductase activity"/>
    <property type="evidence" value="ECO:0007669"/>
    <property type="project" value="InterPro"/>
</dbReference>
<dbReference type="GO" id="GO:0006122">
    <property type="term" value="P:mitochondrial electron transport, ubiquinol to cytochrome c"/>
    <property type="evidence" value="ECO:0007669"/>
    <property type="project" value="TreeGrafter"/>
</dbReference>
<dbReference type="CDD" id="cd00290">
    <property type="entry name" value="cytochrome_b_C"/>
    <property type="match status" value="1"/>
</dbReference>
<dbReference type="CDD" id="cd00284">
    <property type="entry name" value="Cytochrome_b_N"/>
    <property type="match status" value="1"/>
</dbReference>
<dbReference type="FunFam" id="1.20.810.10:FF:000002">
    <property type="entry name" value="Cytochrome b"/>
    <property type="match status" value="1"/>
</dbReference>
<dbReference type="Gene3D" id="1.20.810.10">
    <property type="entry name" value="Cytochrome Bc1 Complex, Chain C"/>
    <property type="match status" value="1"/>
</dbReference>
<dbReference type="InterPro" id="IPR005798">
    <property type="entry name" value="Cyt_b/b6_C"/>
</dbReference>
<dbReference type="InterPro" id="IPR036150">
    <property type="entry name" value="Cyt_b/b6_C_sf"/>
</dbReference>
<dbReference type="InterPro" id="IPR005797">
    <property type="entry name" value="Cyt_b/b6_N"/>
</dbReference>
<dbReference type="InterPro" id="IPR027387">
    <property type="entry name" value="Cytb/b6-like_sf"/>
</dbReference>
<dbReference type="InterPro" id="IPR030689">
    <property type="entry name" value="Cytochrome_b"/>
</dbReference>
<dbReference type="InterPro" id="IPR048260">
    <property type="entry name" value="Cytochrome_b_C_euk/bac"/>
</dbReference>
<dbReference type="InterPro" id="IPR048259">
    <property type="entry name" value="Cytochrome_b_N_euk/bac"/>
</dbReference>
<dbReference type="InterPro" id="IPR016174">
    <property type="entry name" value="Di-haem_cyt_TM"/>
</dbReference>
<dbReference type="PANTHER" id="PTHR19271">
    <property type="entry name" value="CYTOCHROME B"/>
    <property type="match status" value="1"/>
</dbReference>
<dbReference type="PANTHER" id="PTHR19271:SF16">
    <property type="entry name" value="CYTOCHROME B"/>
    <property type="match status" value="1"/>
</dbReference>
<dbReference type="Pfam" id="PF00032">
    <property type="entry name" value="Cytochrom_B_C"/>
    <property type="match status" value="1"/>
</dbReference>
<dbReference type="Pfam" id="PF00033">
    <property type="entry name" value="Cytochrome_B"/>
    <property type="match status" value="1"/>
</dbReference>
<dbReference type="PIRSF" id="PIRSF038885">
    <property type="entry name" value="COB"/>
    <property type="match status" value="1"/>
</dbReference>
<dbReference type="SUPFAM" id="SSF81648">
    <property type="entry name" value="a domain/subunit of cytochrome bc1 complex (Ubiquinol-cytochrome c reductase)"/>
    <property type="match status" value="1"/>
</dbReference>
<dbReference type="SUPFAM" id="SSF81342">
    <property type="entry name" value="Transmembrane di-heme cytochromes"/>
    <property type="match status" value="1"/>
</dbReference>
<dbReference type="PROSITE" id="PS51003">
    <property type="entry name" value="CYTB_CTER"/>
    <property type="match status" value="1"/>
</dbReference>
<dbReference type="PROSITE" id="PS51002">
    <property type="entry name" value="CYTB_NTER"/>
    <property type="match status" value="1"/>
</dbReference>
<keyword id="KW-0249">Electron transport</keyword>
<keyword id="KW-0349">Heme</keyword>
<keyword id="KW-0408">Iron</keyword>
<keyword id="KW-0472">Membrane</keyword>
<keyword id="KW-0479">Metal-binding</keyword>
<keyword id="KW-0496">Mitochondrion</keyword>
<keyword id="KW-0999">Mitochondrion inner membrane</keyword>
<keyword id="KW-0679">Respiratory chain</keyword>
<keyword id="KW-0812">Transmembrane</keyword>
<keyword id="KW-1133">Transmembrane helix</keyword>
<keyword id="KW-0813">Transport</keyword>
<keyword id="KW-0830">Ubiquinone</keyword>
<gene>
    <name type="primary">MT-CYB</name>
    <name type="synonym">COB</name>
    <name type="synonym">CYTB</name>
    <name type="synonym">MTCYB</name>
</gene>
<sequence length="379" mass="43126">MTNIRKTHPLIKIINHSFIDLPAPSNISAWWNFGSLLGICLIIQILTGLFLAMHYTSDTMTAFSSVTHICRDVNYGWLIRYMHANGASMFFICLFLHVGRGLYYGSYTYFETWNIGVILLFAVMATAFMGYVLPWGQMSFWGATVITNLLSAIPYIGTTLVEWIWGGFSVDKATLTRFFAFHFILPFIITALVMVHLLFLHETGSNNPSGLISDSDKIPFHPYYTIKDILGILLLILVLMILVLFSPDLLGDPDNYTPANPLNTPPHIKPEWYFLFAYAILRSIPNKLGGVLALVLSILILMLFPILHMSKQRSMMFRPLSQCMFWILVADLFTLTWIGGQPVEYPFIIIGQLASILYFMIILLILPTISLFENKLLKW</sequence>
<name>CYB_NEOCE</name>
<protein>
    <recommendedName>
        <fullName>Cytochrome b</fullName>
    </recommendedName>
    <alternativeName>
        <fullName>Complex III subunit 3</fullName>
    </alternativeName>
    <alternativeName>
        <fullName>Complex III subunit III</fullName>
    </alternativeName>
    <alternativeName>
        <fullName>Cytochrome b-c1 complex subunit 3</fullName>
    </alternativeName>
    <alternativeName>
        <fullName>Ubiquinol-cytochrome-c reductase complex cytochrome b subunit</fullName>
    </alternativeName>
</protein>
<geneLocation type="mitochondrion"/>
<feature type="chain" id="PRO_0000257946" description="Cytochrome b">
    <location>
        <begin position="1"/>
        <end position="379"/>
    </location>
</feature>
<feature type="transmembrane region" description="Helical" evidence="2">
    <location>
        <begin position="33"/>
        <end position="53"/>
    </location>
</feature>
<feature type="transmembrane region" description="Helical" evidence="2">
    <location>
        <begin position="77"/>
        <end position="98"/>
    </location>
</feature>
<feature type="transmembrane region" description="Helical" evidence="2">
    <location>
        <begin position="113"/>
        <end position="133"/>
    </location>
</feature>
<feature type="transmembrane region" description="Helical" evidence="2">
    <location>
        <begin position="178"/>
        <end position="198"/>
    </location>
</feature>
<feature type="transmembrane region" description="Helical" evidence="2">
    <location>
        <begin position="226"/>
        <end position="246"/>
    </location>
</feature>
<feature type="transmembrane region" description="Helical" evidence="2">
    <location>
        <begin position="288"/>
        <end position="308"/>
    </location>
</feature>
<feature type="transmembrane region" description="Helical" evidence="2">
    <location>
        <begin position="320"/>
        <end position="340"/>
    </location>
</feature>
<feature type="transmembrane region" description="Helical" evidence="2">
    <location>
        <begin position="347"/>
        <end position="367"/>
    </location>
</feature>
<feature type="binding site" description="axial binding residue" evidence="2">
    <location>
        <position position="83"/>
    </location>
    <ligand>
        <name>heme b</name>
        <dbReference type="ChEBI" id="CHEBI:60344"/>
        <label>b562</label>
    </ligand>
    <ligandPart>
        <name>Fe</name>
        <dbReference type="ChEBI" id="CHEBI:18248"/>
    </ligandPart>
</feature>
<feature type="binding site" description="axial binding residue" evidence="2">
    <location>
        <position position="97"/>
    </location>
    <ligand>
        <name>heme b</name>
        <dbReference type="ChEBI" id="CHEBI:60344"/>
        <label>b566</label>
    </ligand>
    <ligandPart>
        <name>Fe</name>
        <dbReference type="ChEBI" id="CHEBI:18248"/>
    </ligandPart>
</feature>
<feature type="binding site" description="axial binding residue" evidence="2">
    <location>
        <position position="182"/>
    </location>
    <ligand>
        <name>heme b</name>
        <dbReference type="ChEBI" id="CHEBI:60344"/>
        <label>b562</label>
    </ligand>
    <ligandPart>
        <name>Fe</name>
        <dbReference type="ChEBI" id="CHEBI:18248"/>
    </ligandPart>
</feature>
<feature type="binding site" description="axial binding residue" evidence="2">
    <location>
        <position position="196"/>
    </location>
    <ligand>
        <name>heme b</name>
        <dbReference type="ChEBI" id="CHEBI:60344"/>
        <label>b566</label>
    </ligand>
    <ligandPart>
        <name>Fe</name>
        <dbReference type="ChEBI" id="CHEBI:18248"/>
    </ligandPart>
</feature>
<feature type="binding site" evidence="2">
    <location>
        <position position="201"/>
    </location>
    <ligand>
        <name>a ubiquinone</name>
        <dbReference type="ChEBI" id="CHEBI:16389"/>
    </ligand>
</feature>
<evidence type="ECO:0000250" key="1"/>
<evidence type="ECO:0000250" key="2">
    <source>
        <dbReference type="UniProtKB" id="P00157"/>
    </source>
</evidence>
<evidence type="ECO:0000255" key="3">
    <source>
        <dbReference type="PROSITE-ProRule" id="PRU00967"/>
    </source>
</evidence>
<evidence type="ECO:0000255" key="4">
    <source>
        <dbReference type="PROSITE-ProRule" id="PRU00968"/>
    </source>
</evidence>